<evidence type="ECO:0000255" key="1">
    <source>
        <dbReference type="HAMAP-Rule" id="MF_00564"/>
    </source>
</evidence>
<protein>
    <recommendedName>
        <fullName evidence="1">Ribonuclease PH</fullName>
        <shortName evidence="1">RNase PH</shortName>
        <ecNumber evidence="1">2.7.7.56</ecNumber>
    </recommendedName>
    <alternativeName>
        <fullName evidence="1">tRNA nucleotidyltransferase</fullName>
    </alternativeName>
</protein>
<keyword id="KW-0548">Nucleotidyltransferase</keyword>
<keyword id="KW-0694">RNA-binding</keyword>
<keyword id="KW-0698">rRNA processing</keyword>
<keyword id="KW-0808">Transferase</keyword>
<keyword id="KW-0819">tRNA processing</keyword>
<keyword id="KW-0820">tRNA-binding</keyword>
<sequence length="238" mass="25237">MRPEGRAAGQIRPLRLTRHYTKHAEGSVLVEFGDTKVLCTASVDEGVPRFLKGQGQGWVTAEYGMLPRSTHSRMAREAAKGKQGGRTMEIQRLIARSLRAAVDLKKLGEFTITLDCDVIQADGGTRTASITGACVALADALGALVAAGKLKESPLKGMVAAVSVGIVAGGAVCDLEYVEDSAAETDMNVVMMEDGRMIEVQGTAEGEPFSHEELLTLLALARDGIGQIIQAQKTALEQ</sequence>
<proteinExistence type="inferred from homology"/>
<name>RNPH_EDWI9</name>
<organism>
    <name type="scientific">Edwardsiella ictaluri (strain 93-146)</name>
    <dbReference type="NCBI Taxonomy" id="634503"/>
    <lineage>
        <taxon>Bacteria</taxon>
        <taxon>Pseudomonadati</taxon>
        <taxon>Pseudomonadota</taxon>
        <taxon>Gammaproteobacteria</taxon>
        <taxon>Enterobacterales</taxon>
        <taxon>Hafniaceae</taxon>
        <taxon>Edwardsiella</taxon>
    </lineage>
</organism>
<feature type="chain" id="PRO_1000212062" description="Ribonuclease PH">
    <location>
        <begin position="1"/>
        <end position="238"/>
    </location>
</feature>
<feature type="binding site" evidence="1">
    <location>
        <position position="86"/>
    </location>
    <ligand>
        <name>phosphate</name>
        <dbReference type="ChEBI" id="CHEBI:43474"/>
        <note>substrate</note>
    </ligand>
</feature>
<feature type="binding site" evidence="1">
    <location>
        <begin position="124"/>
        <end position="126"/>
    </location>
    <ligand>
        <name>phosphate</name>
        <dbReference type="ChEBI" id="CHEBI:43474"/>
        <note>substrate</note>
    </ligand>
</feature>
<reference key="1">
    <citation type="submission" date="2009-03" db="EMBL/GenBank/DDBJ databases">
        <title>Complete genome sequence of Edwardsiella ictaluri 93-146.</title>
        <authorList>
            <person name="Williams M.L."/>
            <person name="Gillaspy A.F."/>
            <person name="Dyer D.W."/>
            <person name="Thune R.L."/>
            <person name="Waldbieser G.C."/>
            <person name="Schuster S.C."/>
            <person name="Gipson J."/>
            <person name="Zaitshik J."/>
            <person name="Landry C."/>
            <person name="Lawrence M.L."/>
        </authorList>
    </citation>
    <scope>NUCLEOTIDE SEQUENCE [LARGE SCALE GENOMIC DNA]</scope>
    <source>
        <strain>93-146</strain>
    </source>
</reference>
<dbReference type="EC" id="2.7.7.56" evidence="1"/>
<dbReference type="EMBL" id="CP001600">
    <property type="protein sequence ID" value="ACR67309.1"/>
    <property type="molecule type" value="Genomic_DNA"/>
</dbReference>
<dbReference type="RefSeq" id="WP_015869533.1">
    <property type="nucleotide sequence ID" value="NZ_CP169062.1"/>
</dbReference>
<dbReference type="SMR" id="C5B9C9"/>
<dbReference type="STRING" id="67780.B6E78_11405"/>
<dbReference type="GeneID" id="69537159"/>
<dbReference type="KEGG" id="eic:NT01EI_0049"/>
<dbReference type="PATRIC" id="fig|634503.3.peg.42"/>
<dbReference type="HOGENOM" id="CLU_050858_0_0_6"/>
<dbReference type="OrthoDB" id="9802265at2"/>
<dbReference type="Proteomes" id="UP000001485">
    <property type="component" value="Chromosome"/>
</dbReference>
<dbReference type="GO" id="GO:0000175">
    <property type="term" value="F:3'-5'-RNA exonuclease activity"/>
    <property type="evidence" value="ECO:0007669"/>
    <property type="project" value="UniProtKB-UniRule"/>
</dbReference>
<dbReference type="GO" id="GO:0000049">
    <property type="term" value="F:tRNA binding"/>
    <property type="evidence" value="ECO:0007669"/>
    <property type="project" value="UniProtKB-UniRule"/>
</dbReference>
<dbReference type="GO" id="GO:0009022">
    <property type="term" value="F:tRNA nucleotidyltransferase activity"/>
    <property type="evidence" value="ECO:0007669"/>
    <property type="project" value="UniProtKB-UniRule"/>
</dbReference>
<dbReference type="GO" id="GO:0016075">
    <property type="term" value="P:rRNA catabolic process"/>
    <property type="evidence" value="ECO:0007669"/>
    <property type="project" value="UniProtKB-UniRule"/>
</dbReference>
<dbReference type="GO" id="GO:0006364">
    <property type="term" value="P:rRNA processing"/>
    <property type="evidence" value="ECO:0007669"/>
    <property type="project" value="UniProtKB-KW"/>
</dbReference>
<dbReference type="GO" id="GO:0008033">
    <property type="term" value="P:tRNA processing"/>
    <property type="evidence" value="ECO:0007669"/>
    <property type="project" value="UniProtKB-UniRule"/>
</dbReference>
<dbReference type="CDD" id="cd11362">
    <property type="entry name" value="RNase_PH_bact"/>
    <property type="match status" value="1"/>
</dbReference>
<dbReference type="FunFam" id="3.30.230.70:FF:000003">
    <property type="entry name" value="Ribonuclease PH"/>
    <property type="match status" value="1"/>
</dbReference>
<dbReference type="Gene3D" id="3.30.230.70">
    <property type="entry name" value="GHMP Kinase, N-terminal domain"/>
    <property type="match status" value="1"/>
</dbReference>
<dbReference type="HAMAP" id="MF_00564">
    <property type="entry name" value="RNase_PH"/>
    <property type="match status" value="1"/>
</dbReference>
<dbReference type="InterPro" id="IPR001247">
    <property type="entry name" value="ExoRNase_PH_dom1"/>
</dbReference>
<dbReference type="InterPro" id="IPR015847">
    <property type="entry name" value="ExoRNase_PH_dom2"/>
</dbReference>
<dbReference type="InterPro" id="IPR036345">
    <property type="entry name" value="ExoRNase_PH_dom2_sf"/>
</dbReference>
<dbReference type="InterPro" id="IPR027408">
    <property type="entry name" value="PNPase/RNase_PH_dom_sf"/>
</dbReference>
<dbReference type="InterPro" id="IPR020568">
    <property type="entry name" value="Ribosomal_Su5_D2-typ_SF"/>
</dbReference>
<dbReference type="InterPro" id="IPR050080">
    <property type="entry name" value="RNase_PH"/>
</dbReference>
<dbReference type="InterPro" id="IPR002381">
    <property type="entry name" value="RNase_PH_bac-type"/>
</dbReference>
<dbReference type="InterPro" id="IPR018336">
    <property type="entry name" value="RNase_PH_CS"/>
</dbReference>
<dbReference type="NCBIfam" id="TIGR01966">
    <property type="entry name" value="RNasePH"/>
    <property type="match status" value="1"/>
</dbReference>
<dbReference type="PANTHER" id="PTHR11953">
    <property type="entry name" value="EXOSOME COMPLEX COMPONENT"/>
    <property type="match status" value="1"/>
</dbReference>
<dbReference type="PANTHER" id="PTHR11953:SF0">
    <property type="entry name" value="EXOSOME COMPLEX COMPONENT RRP41"/>
    <property type="match status" value="1"/>
</dbReference>
<dbReference type="Pfam" id="PF01138">
    <property type="entry name" value="RNase_PH"/>
    <property type="match status" value="1"/>
</dbReference>
<dbReference type="Pfam" id="PF03725">
    <property type="entry name" value="RNase_PH_C"/>
    <property type="match status" value="1"/>
</dbReference>
<dbReference type="SUPFAM" id="SSF55666">
    <property type="entry name" value="Ribonuclease PH domain 2-like"/>
    <property type="match status" value="1"/>
</dbReference>
<dbReference type="SUPFAM" id="SSF54211">
    <property type="entry name" value="Ribosomal protein S5 domain 2-like"/>
    <property type="match status" value="1"/>
</dbReference>
<dbReference type="PROSITE" id="PS01277">
    <property type="entry name" value="RIBONUCLEASE_PH"/>
    <property type="match status" value="1"/>
</dbReference>
<accession>C5B9C9</accession>
<gene>
    <name evidence="1" type="primary">rph</name>
    <name type="ordered locus">NT01EI_0049</name>
</gene>
<comment type="function">
    <text evidence="1">Phosphorolytic 3'-5' exoribonuclease that plays an important role in tRNA 3'-end maturation. Removes nucleotide residues following the 3'-CCA terminus of tRNAs; can also add nucleotides to the ends of RNA molecules by using nucleoside diphosphates as substrates, but this may not be physiologically important. Probably plays a role in initiation of 16S rRNA degradation (leading to ribosome degradation) during starvation.</text>
</comment>
<comment type="catalytic activity">
    <reaction evidence="1">
        <text>tRNA(n+1) + phosphate = tRNA(n) + a ribonucleoside 5'-diphosphate</text>
        <dbReference type="Rhea" id="RHEA:10628"/>
        <dbReference type="Rhea" id="RHEA-COMP:17343"/>
        <dbReference type="Rhea" id="RHEA-COMP:17344"/>
        <dbReference type="ChEBI" id="CHEBI:43474"/>
        <dbReference type="ChEBI" id="CHEBI:57930"/>
        <dbReference type="ChEBI" id="CHEBI:173114"/>
        <dbReference type="EC" id="2.7.7.56"/>
    </reaction>
</comment>
<comment type="subunit">
    <text evidence="1">Homohexameric ring arranged as a trimer of dimers.</text>
</comment>
<comment type="similarity">
    <text evidence="1">Belongs to the RNase PH family.</text>
</comment>